<protein>
    <recommendedName>
        <fullName evidence="1">Pyrimidine/purine nucleoside phosphorylase</fullName>
        <ecNumber evidence="1">2.4.2.1</ecNumber>
        <ecNumber evidence="1">2.4.2.2</ecNumber>
    </recommendedName>
    <alternativeName>
        <fullName evidence="1">Adenosine phosphorylase</fullName>
    </alternativeName>
    <alternativeName>
        <fullName evidence="1">Cytidine phosphorylase</fullName>
    </alternativeName>
    <alternativeName>
        <fullName evidence="1">Guanosine phosphorylase</fullName>
    </alternativeName>
    <alternativeName>
        <fullName evidence="1">Inosine phosphorylase</fullName>
    </alternativeName>
    <alternativeName>
        <fullName evidence="1">Thymidine phosphorylase</fullName>
    </alternativeName>
    <alternativeName>
        <fullName evidence="1">Uridine phosphorylase</fullName>
    </alternativeName>
    <alternativeName>
        <fullName evidence="1">Xanthosine phosphorylase</fullName>
    </alternativeName>
</protein>
<evidence type="ECO:0000255" key="1">
    <source>
        <dbReference type="HAMAP-Rule" id="MF_01537"/>
    </source>
</evidence>
<sequence>MSQFENVTIIKKANVYYDGKVTSRSILFQDGSKKTLGILMPGQYDFGTDEKEIMEILDGELLVKLPGQEVWSEIKGGQSFEVPAKSRFQMDVKKISDYCCSYIQNS</sequence>
<proteinExistence type="inferred from homology"/>
<reference key="1">
    <citation type="journal article" date="2003" name="Nature">
        <title>Unique physiological and pathogenic features of Leptospira interrogans revealed by whole-genome sequencing.</title>
        <authorList>
            <person name="Ren S.-X."/>
            <person name="Fu G."/>
            <person name="Jiang X.-G."/>
            <person name="Zeng R."/>
            <person name="Miao Y.-G."/>
            <person name="Xu H."/>
            <person name="Zhang Y.-X."/>
            <person name="Xiong H."/>
            <person name="Lu G."/>
            <person name="Lu L.-F."/>
            <person name="Jiang H.-Q."/>
            <person name="Jia J."/>
            <person name="Tu Y.-F."/>
            <person name="Jiang J.-X."/>
            <person name="Gu W.-Y."/>
            <person name="Zhang Y.-Q."/>
            <person name="Cai Z."/>
            <person name="Sheng H.-H."/>
            <person name="Yin H.-F."/>
            <person name="Zhang Y."/>
            <person name="Zhu G.-F."/>
            <person name="Wan M."/>
            <person name="Huang H.-L."/>
            <person name="Qian Z."/>
            <person name="Wang S.-Y."/>
            <person name="Ma W."/>
            <person name="Yao Z.-J."/>
            <person name="Shen Y."/>
            <person name="Qiang B.-Q."/>
            <person name="Xia Q.-C."/>
            <person name="Guo X.-K."/>
            <person name="Danchin A."/>
            <person name="Saint Girons I."/>
            <person name="Somerville R.L."/>
            <person name="Wen Y.-M."/>
            <person name="Shi M.-H."/>
            <person name="Chen Z."/>
            <person name="Xu J.-G."/>
            <person name="Zhao G.-P."/>
        </authorList>
    </citation>
    <scope>NUCLEOTIDE SEQUENCE [LARGE SCALE GENOMIC DNA]</scope>
    <source>
        <strain>56601</strain>
    </source>
</reference>
<accession>Q8F7H3</accession>
<dbReference type="EC" id="2.4.2.1" evidence="1"/>
<dbReference type="EC" id="2.4.2.2" evidence="1"/>
<dbReference type="EMBL" id="AE010300">
    <property type="protein sequence ID" value="AAN48171.1"/>
    <property type="molecule type" value="Genomic_DNA"/>
</dbReference>
<dbReference type="RefSeq" id="NP_711153.1">
    <property type="nucleotide sequence ID" value="NC_004342.2"/>
</dbReference>
<dbReference type="RefSeq" id="WP_000077234.1">
    <property type="nucleotide sequence ID" value="NC_004342.2"/>
</dbReference>
<dbReference type="SMR" id="Q8F7H3"/>
<dbReference type="FunCoup" id="Q8F7H3">
    <property type="interactions" value="49"/>
</dbReference>
<dbReference type="STRING" id="189518.LA_0973"/>
<dbReference type="PaxDb" id="189518-LA_0973"/>
<dbReference type="EnsemblBacteria" id="AAN48171">
    <property type="protein sequence ID" value="AAN48171"/>
    <property type="gene ID" value="LA_0973"/>
</dbReference>
<dbReference type="KEGG" id="lil:LA_0973"/>
<dbReference type="PATRIC" id="fig|189518.3.peg.973"/>
<dbReference type="HOGENOM" id="CLU_157874_1_0_12"/>
<dbReference type="InParanoid" id="Q8F7H3"/>
<dbReference type="OrthoDB" id="9793848at2"/>
<dbReference type="Proteomes" id="UP000001408">
    <property type="component" value="Chromosome I"/>
</dbReference>
<dbReference type="GO" id="GO:0005829">
    <property type="term" value="C:cytosol"/>
    <property type="evidence" value="ECO:0000318"/>
    <property type="project" value="GO_Central"/>
</dbReference>
<dbReference type="GO" id="GO:0047975">
    <property type="term" value="F:guanosine phosphorylase activity"/>
    <property type="evidence" value="ECO:0007669"/>
    <property type="project" value="UniProtKB-EC"/>
</dbReference>
<dbReference type="GO" id="GO:0004731">
    <property type="term" value="F:purine-nucleoside phosphorylase activity"/>
    <property type="evidence" value="ECO:0000318"/>
    <property type="project" value="GO_Central"/>
</dbReference>
<dbReference type="GO" id="GO:0016154">
    <property type="term" value="F:pyrimidine-nucleoside phosphorylase activity"/>
    <property type="evidence" value="ECO:0000318"/>
    <property type="project" value="GO_Central"/>
</dbReference>
<dbReference type="GO" id="GO:0009032">
    <property type="term" value="F:thymidine phosphorylase activity"/>
    <property type="evidence" value="ECO:0007669"/>
    <property type="project" value="UniProtKB-EC"/>
</dbReference>
<dbReference type="GO" id="GO:0004850">
    <property type="term" value="F:uridine phosphorylase activity"/>
    <property type="evidence" value="ECO:0007669"/>
    <property type="project" value="UniProtKB-EC"/>
</dbReference>
<dbReference type="CDD" id="cd20296">
    <property type="entry name" value="cupin_PpnP-like"/>
    <property type="match status" value="1"/>
</dbReference>
<dbReference type="FunFam" id="2.60.120.10:FF:000016">
    <property type="entry name" value="Pyrimidine/purine nucleoside phosphorylase"/>
    <property type="match status" value="1"/>
</dbReference>
<dbReference type="Gene3D" id="2.60.120.10">
    <property type="entry name" value="Jelly Rolls"/>
    <property type="match status" value="1"/>
</dbReference>
<dbReference type="HAMAP" id="MF_01537">
    <property type="entry name" value="Nucleos_phosphorylase_PpnP"/>
    <property type="match status" value="1"/>
</dbReference>
<dbReference type="InterPro" id="IPR009664">
    <property type="entry name" value="Ppnp"/>
</dbReference>
<dbReference type="InterPro" id="IPR014710">
    <property type="entry name" value="RmlC-like_jellyroll"/>
</dbReference>
<dbReference type="InterPro" id="IPR011051">
    <property type="entry name" value="RmlC_Cupin_sf"/>
</dbReference>
<dbReference type="PANTHER" id="PTHR36540">
    <property type="entry name" value="PYRIMIDINE/PURINE NUCLEOSIDE PHOSPHORYLASE"/>
    <property type="match status" value="1"/>
</dbReference>
<dbReference type="PANTHER" id="PTHR36540:SF1">
    <property type="entry name" value="PYRIMIDINE_PURINE NUCLEOSIDE PHOSPHORYLASE"/>
    <property type="match status" value="1"/>
</dbReference>
<dbReference type="Pfam" id="PF06865">
    <property type="entry name" value="Ppnp"/>
    <property type="match status" value="1"/>
</dbReference>
<dbReference type="SUPFAM" id="SSF51182">
    <property type="entry name" value="RmlC-like cupins"/>
    <property type="match status" value="1"/>
</dbReference>
<organism>
    <name type="scientific">Leptospira interrogans serogroup Icterohaemorrhagiae serovar Lai (strain 56601)</name>
    <dbReference type="NCBI Taxonomy" id="189518"/>
    <lineage>
        <taxon>Bacteria</taxon>
        <taxon>Pseudomonadati</taxon>
        <taxon>Spirochaetota</taxon>
        <taxon>Spirochaetia</taxon>
        <taxon>Leptospirales</taxon>
        <taxon>Leptospiraceae</taxon>
        <taxon>Leptospira</taxon>
    </lineage>
</organism>
<feature type="chain" id="PRO_0000211769" description="Pyrimidine/purine nucleoside phosphorylase">
    <location>
        <begin position="1"/>
        <end position="106"/>
    </location>
</feature>
<keyword id="KW-0328">Glycosyltransferase</keyword>
<keyword id="KW-1185">Reference proteome</keyword>
<keyword id="KW-0808">Transferase</keyword>
<name>PPNP_LEPIN</name>
<comment type="function">
    <text evidence="1">Catalyzes the phosphorolysis of diverse nucleosides, yielding D-ribose 1-phosphate and the respective free bases. Can use uridine, adenosine, guanosine, cytidine, thymidine, inosine and xanthosine as substrates. Also catalyzes the reverse reactions.</text>
</comment>
<comment type="catalytic activity">
    <reaction evidence="1">
        <text>a purine D-ribonucleoside + phosphate = a purine nucleobase + alpha-D-ribose 1-phosphate</text>
        <dbReference type="Rhea" id="RHEA:19805"/>
        <dbReference type="ChEBI" id="CHEBI:26386"/>
        <dbReference type="ChEBI" id="CHEBI:43474"/>
        <dbReference type="ChEBI" id="CHEBI:57720"/>
        <dbReference type="ChEBI" id="CHEBI:142355"/>
        <dbReference type="EC" id="2.4.2.1"/>
    </reaction>
</comment>
<comment type="catalytic activity">
    <reaction evidence="1">
        <text>adenosine + phosphate = alpha-D-ribose 1-phosphate + adenine</text>
        <dbReference type="Rhea" id="RHEA:27642"/>
        <dbReference type="ChEBI" id="CHEBI:16335"/>
        <dbReference type="ChEBI" id="CHEBI:16708"/>
        <dbReference type="ChEBI" id="CHEBI:43474"/>
        <dbReference type="ChEBI" id="CHEBI:57720"/>
        <dbReference type="EC" id="2.4.2.1"/>
    </reaction>
</comment>
<comment type="catalytic activity">
    <reaction evidence="1">
        <text>cytidine + phosphate = cytosine + alpha-D-ribose 1-phosphate</text>
        <dbReference type="Rhea" id="RHEA:52540"/>
        <dbReference type="ChEBI" id="CHEBI:16040"/>
        <dbReference type="ChEBI" id="CHEBI:17562"/>
        <dbReference type="ChEBI" id="CHEBI:43474"/>
        <dbReference type="ChEBI" id="CHEBI:57720"/>
        <dbReference type="EC" id="2.4.2.2"/>
    </reaction>
</comment>
<comment type="catalytic activity">
    <reaction evidence="1">
        <text>guanosine + phosphate = alpha-D-ribose 1-phosphate + guanine</text>
        <dbReference type="Rhea" id="RHEA:13233"/>
        <dbReference type="ChEBI" id="CHEBI:16235"/>
        <dbReference type="ChEBI" id="CHEBI:16750"/>
        <dbReference type="ChEBI" id="CHEBI:43474"/>
        <dbReference type="ChEBI" id="CHEBI:57720"/>
        <dbReference type="EC" id="2.4.2.1"/>
    </reaction>
</comment>
<comment type="catalytic activity">
    <reaction evidence="1">
        <text>inosine + phosphate = alpha-D-ribose 1-phosphate + hypoxanthine</text>
        <dbReference type="Rhea" id="RHEA:27646"/>
        <dbReference type="ChEBI" id="CHEBI:17368"/>
        <dbReference type="ChEBI" id="CHEBI:17596"/>
        <dbReference type="ChEBI" id="CHEBI:43474"/>
        <dbReference type="ChEBI" id="CHEBI:57720"/>
        <dbReference type="EC" id="2.4.2.1"/>
    </reaction>
</comment>
<comment type="catalytic activity">
    <reaction evidence="1">
        <text>thymidine + phosphate = 2-deoxy-alpha-D-ribose 1-phosphate + thymine</text>
        <dbReference type="Rhea" id="RHEA:16037"/>
        <dbReference type="ChEBI" id="CHEBI:17748"/>
        <dbReference type="ChEBI" id="CHEBI:17821"/>
        <dbReference type="ChEBI" id="CHEBI:43474"/>
        <dbReference type="ChEBI" id="CHEBI:57259"/>
        <dbReference type="EC" id="2.4.2.2"/>
    </reaction>
</comment>
<comment type="catalytic activity">
    <reaction evidence="1">
        <text>uridine + phosphate = alpha-D-ribose 1-phosphate + uracil</text>
        <dbReference type="Rhea" id="RHEA:24388"/>
        <dbReference type="ChEBI" id="CHEBI:16704"/>
        <dbReference type="ChEBI" id="CHEBI:17568"/>
        <dbReference type="ChEBI" id="CHEBI:43474"/>
        <dbReference type="ChEBI" id="CHEBI:57720"/>
        <dbReference type="EC" id="2.4.2.2"/>
    </reaction>
</comment>
<comment type="catalytic activity">
    <reaction evidence="1">
        <text>xanthosine + phosphate = alpha-D-ribose 1-phosphate + xanthine</text>
        <dbReference type="Rhea" id="RHEA:27638"/>
        <dbReference type="ChEBI" id="CHEBI:17712"/>
        <dbReference type="ChEBI" id="CHEBI:18107"/>
        <dbReference type="ChEBI" id="CHEBI:43474"/>
        <dbReference type="ChEBI" id="CHEBI:57720"/>
        <dbReference type="EC" id="2.4.2.1"/>
    </reaction>
</comment>
<comment type="similarity">
    <text evidence="1">Belongs to the nucleoside phosphorylase PpnP family.</text>
</comment>
<gene>
    <name evidence="1" type="primary">ppnP</name>
    <name type="ordered locus">LA_0973</name>
</gene>